<feature type="chain" id="PRO_0000145155" description="DNA topoisomerase 1">
    <location>
        <begin position="1"/>
        <end position="709"/>
    </location>
</feature>
<feature type="domain" description="Toprim" evidence="1">
    <location>
        <begin position="3"/>
        <end position="127"/>
    </location>
</feature>
<feature type="domain" description="Topo IA-type catalytic" evidence="2">
    <location>
        <begin position="143"/>
        <end position="598"/>
    </location>
</feature>
<feature type="zinc finger region" description="C4-type 1">
    <location>
        <begin position="618"/>
        <end position="646"/>
    </location>
</feature>
<feature type="zinc finger region" description="C4-type 2">
    <location>
        <begin position="667"/>
        <end position="696"/>
    </location>
</feature>
<feature type="region of interest" description="Interaction with DNA" evidence="1">
    <location>
        <begin position="176"/>
        <end position="181"/>
    </location>
</feature>
<feature type="active site" description="O-(5'-phospho-DNA)-tyrosine intermediate" evidence="2">
    <location>
        <position position="334"/>
    </location>
</feature>
<feature type="binding site" evidence="1">
    <location>
        <position position="9"/>
    </location>
    <ligand>
        <name>Mg(2+)</name>
        <dbReference type="ChEBI" id="CHEBI:18420"/>
        <note>catalytic</note>
    </ligand>
</feature>
<feature type="binding site" evidence="1">
    <location>
        <position position="95"/>
    </location>
    <ligand>
        <name>Mg(2+)</name>
        <dbReference type="ChEBI" id="CHEBI:18420"/>
        <note>catalytic</note>
    </ligand>
</feature>
<feature type="site" description="Interaction with DNA" evidence="1">
    <location>
        <position position="34"/>
    </location>
</feature>
<feature type="site" description="Interaction with DNA" evidence="1">
    <location>
        <position position="153"/>
    </location>
</feature>
<feature type="site" description="Interaction with DNA" evidence="1">
    <location>
        <position position="157"/>
    </location>
</feature>
<feature type="site" description="Interaction with DNA" evidence="1">
    <location>
        <position position="336"/>
    </location>
</feature>
<feature type="site" description="Interaction with DNA" evidence="1">
    <location>
        <position position="529"/>
    </location>
</feature>
<keyword id="KW-0238">DNA-binding</keyword>
<keyword id="KW-0413">Isomerase</keyword>
<keyword id="KW-0460">Magnesium</keyword>
<keyword id="KW-0479">Metal-binding</keyword>
<keyword id="KW-1185">Reference proteome</keyword>
<keyword id="KW-0677">Repeat</keyword>
<keyword id="KW-0799">Topoisomerase</keyword>
<keyword id="KW-0862">Zinc</keyword>
<keyword id="KW-0863">Zinc-finger</keyword>
<sequence length="709" mass="82545">MIKNLVVIESPNKVKTLKQYLPSDEFEIVSTVGHIREMVYKNFGFDENTYTPIWEDWTKNKQKNPKQKHLLSKFEIIKSIKAKASDAQNIFLASDPDREGEAISWHVYDLLDQKDKAKCKRITFNEITKKAVVDALKQPRNIDLNWVESQFARQILDRMIGFRLSRLLNSYLQAKSAGRVQSVALRFLEEREKEIAKFVPRFWWTVDVLLNKENNQKVVCANKSIPLVLREINPELSASLKLDFEAAENVSGIDFLNEASATRFANQLTGEYEVYFIDEPKIYYSSPNPVYTTASLQKDAINKLGWSSKKVTMVAQRLYEGISVNGKQTALISYPRTDSIRISNQFQSECEKYIEKEFGSHYLADKNKLKRHKKDEKIIQDAHEGIHPTYITITPNDLKNGVKRDEFLLYRLIWIRTVASLMADAKTSRTIVRFINQKNKFYTSSKSLLFDGYQRLYEEIKPNTKDELYIDLSKLKIGDKFSFEKISVNEHKTNPPPRYTQASLIEELEKSNIGRPSTYNTMASVNLERGYANLVNRFFYITELGEKVNNELSKHFGNVINKEFTKKMEKSLDEIAENKVNYQEFLKQFWTNFKSDVKLAENSIQKVKKEKELVERDCPKCNQPLVYRYTKRGNEKFVGCSDFPKCKYSEFSNPKPKLTLETLDELCPECNNKLVKRRTKFNAKKTFIGCSNFPNCRFIKKDNAAEFKQ</sequence>
<accession>P47368</accession>
<proteinExistence type="inferred from homology"/>
<comment type="function">
    <text evidence="1">Releases the supercoiling and torsional tension of DNA, which is introduced during the DNA replication and transcription, by transiently cleaving and rejoining one strand of the DNA duplex. Introduces a single-strand break via transesterification at a target site in duplex DNA. The scissile phosphodiester is attacked by the catalytic tyrosine of the enzyme, resulting in the formation of a DNA-(5'-phosphotyrosyl)-enzyme intermediate and the expulsion of a 3'-OH DNA strand. The free DNA strand then undergoes passage around the unbroken strand, thus removing DNA supercoils. Finally, in the religation step, the DNA 3'-OH attacks the covalent intermediate to expel the active-site tyrosine and restore the DNA phosphodiester backbone.</text>
</comment>
<comment type="catalytic activity">
    <reaction evidence="1">
        <text>ATP-independent breakage of single-stranded DNA, followed by passage and rejoining.</text>
        <dbReference type="EC" id="5.6.2.1"/>
    </reaction>
</comment>
<comment type="cofactor">
    <cofactor evidence="1">
        <name>Mg(2+)</name>
        <dbReference type="ChEBI" id="CHEBI:18420"/>
    </cofactor>
</comment>
<comment type="subunit">
    <text evidence="1">Monomer.</text>
</comment>
<comment type="similarity">
    <text evidence="1">Belongs to the type IA topoisomerase family.</text>
</comment>
<dbReference type="EC" id="5.6.2.1" evidence="1"/>
<dbReference type="EMBL" id="L43967">
    <property type="protein sequence ID" value="AAC71340.1"/>
    <property type="molecule type" value="Genomic_DNA"/>
</dbReference>
<dbReference type="EMBL" id="U02134">
    <property type="protein sequence ID" value="AAD12411.1"/>
    <property type="molecule type" value="Genomic_DNA"/>
</dbReference>
<dbReference type="EMBL" id="U02242">
    <property type="protein sequence ID" value="AAA03398.1"/>
    <property type="molecule type" value="Genomic_DNA"/>
</dbReference>
<dbReference type="PIR" id="E64213">
    <property type="entry name" value="E64213"/>
</dbReference>
<dbReference type="RefSeq" id="WP_009885678.1">
    <property type="nucleotide sequence ID" value="NC_000908.2"/>
</dbReference>
<dbReference type="SMR" id="P47368"/>
<dbReference type="FunCoup" id="P47368">
    <property type="interactions" value="150"/>
</dbReference>
<dbReference type="STRING" id="243273.MG_122"/>
<dbReference type="GeneID" id="88282246"/>
<dbReference type="KEGG" id="mge:MG_122"/>
<dbReference type="eggNOG" id="COG0550">
    <property type="taxonomic scope" value="Bacteria"/>
</dbReference>
<dbReference type="HOGENOM" id="CLU_002929_4_3_14"/>
<dbReference type="InParanoid" id="P47368"/>
<dbReference type="OrthoDB" id="9804262at2"/>
<dbReference type="BioCyc" id="MGEN243273:G1GJ2-135-MONOMER"/>
<dbReference type="Proteomes" id="UP000000807">
    <property type="component" value="Chromosome"/>
</dbReference>
<dbReference type="GO" id="GO:0005694">
    <property type="term" value="C:chromosome"/>
    <property type="evidence" value="ECO:0007669"/>
    <property type="project" value="InterPro"/>
</dbReference>
<dbReference type="GO" id="GO:0003677">
    <property type="term" value="F:DNA binding"/>
    <property type="evidence" value="ECO:0007669"/>
    <property type="project" value="UniProtKB-KW"/>
</dbReference>
<dbReference type="GO" id="GO:0003917">
    <property type="term" value="F:DNA topoisomerase type I (single strand cut, ATP-independent) activity"/>
    <property type="evidence" value="ECO:0007669"/>
    <property type="project" value="UniProtKB-UniRule"/>
</dbReference>
<dbReference type="GO" id="GO:0008270">
    <property type="term" value="F:zinc ion binding"/>
    <property type="evidence" value="ECO:0007669"/>
    <property type="project" value="UniProtKB-KW"/>
</dbReference>
<dbReference type="GO" id="GO:0006265">
    <property type="term" value="P:DNA topological change"/>
    <property type="evidence" value="ECO:0007669"/>
    <property type="project" value="UniProtKB-UniRule"/>
</dbReference>
<dbReference type="CDD" id="cd00186">
    <property type="entry name" value="TOP1Ac"/>
    <property type="match status" value="1"/>
</dbReference>
<dbReference type="Gene3D" id="3.40.50.140">
    <property type="match status" value="1"/>
</dbReference>
<dbReference type="Gene3D" id="3.30.65.10">
    <property type="entry name" value="Bacterial Topoisomerase I, domain 1"/>
    <property type="match status" value="2"/>
</dbReference>
<dbReference type="Gene3D" id="1.10.460.10">
    <property type="entry name" value="Topoisomerase I, domain 2"/>
    <property type="match status" value="1"/>
</dbReference>
<dbReference type="Gene3D" id="2.70.20.10">
    <property type="entry name" value="Topoisomerase I, domain 3"/>
    <property type="match status" value="1"/>
</dbReference>
<dbReference type="Gene3D" id="1.10.290.10">
    <property type="entry name" value="Topoisomerase I, domain 4"/>
    <property type="match status" value="1"/>
</dbReference>
<dbReference type="HAMAP" id="MF_00952">
    <property type="entry name" value="Topoisom_1_prok"/>
    <property type="match status" value="1"/>
</dbReference>
<dbReference type="InterPro" id="IPR000380">
    <property type="entry name" value="Topo_IA"/>
</dbReference>
<dbReference type="InterPro" id="IPR003601">
    <property type="entry name" value="Topo_IA_2"/>
</dbReference>
<dbReference type="InterPro" id="IPR023406">
    <property type="entry name" value="Topo_IA_AS"/>
</dbReference>
<dbReference type="InterPro" id="IPR013497">
    <property type="entry name" value="Topo_IA_cen"/>
</dbReference>
<dbReference type="InterPro" id="IPR013824">
    <property type="entry name" value="Topo_IA_cen_sub1"/>
</dbReference>
<dbReference type="InterPro" id="IPR013825">
    <property type="entry name" value="Topo_IA_cen_sub2"/>
</dbReference>
<dbReference type="InterPro" id="IPR013826">
    <property type="entry name" value="Topo_IA_cen_sub3"/>
</dbReference>
<dbReference type="InterPro" id="IPR023405">
    <property type="entry name" value="Topo_IA_core_domain"/>
</dbReference>
<dbReference type="InterPro" id="IPR003602">
    <property type="entry name" value="Topo_IA_DNA-bd_dom"/>
</dbReference>
<dbReference type="InterPro" id="IPR013498">
    <property type="entry name" value="Topo_IA_Znf"/>
</dbReference>
<dbReference type="InterPro" id="IPR005733">
    <property type="entry name" value="TopoI_bac-type"/>
</dbReference>
<dbReference type="InterPro" id="IPR028612">
    <property type="entry name" value="Topoisom_1_IA"/>
</dbReference>
<dbReference type="InterPro" id="IPR006171">
    <property type="entry name" value="TOPRIM_dom"/>
</dbReference>
<dbReference type="NCBIfam" id="TIGR01051">
    <property type="entry name" value="topA_bact"/>
    <property type="match status" value="1"/>
</dbReference>
<dbReference type="PANTHER" id="PTHR42785:SF1">
    <property type="entry name" value="DNA TOPOISOMERASE"/>
    <property type="match status" value="1"/>
</dbReference>
<dbReference type="PANTHER" id="PTHR42785">
    <property type="entry name" value="DNA TOPOISOMERASE, TYPE IA, CORE"/>
    <property type="match status" value="1"/>
</dbReference>
<dbReference type="Pfam" id="PF01131">
    <property type="entry name" value="Topoisom_bac"/>
    <property type="match status" value="1"/>
</dbReference>
<dbReference type="Pfam" id="PF01751">
    <property type="entry name" value="Toprim"/>
    <property type="match status" value="1"/>
</dbReference>
<dbReference type="Pfam" id="PF01396">
    <property type="entry name" value="Zn_ribbon_Top1"/>
    <property type="match status" value="2"/>
</dbReference>
<dbReference type="PRINTS" id="PR00417">
    <property type="entry name" value="PRTPISMRASEI"/>
</dbReference>
<dbReference type="SMART" id="SM00437">
    <property type="entry name" value="TOP1Ac"/>
    <property type="match status" value="1"/>
</dbReference>
<dbReference type="SMART" id="SM00436">
    <property type="entry name" value="TOP1Bc"/>
    <property type="match status" value="1"/>
</dbReference>
<dbReference type="SMART" id="SM00493">
    <property type="entry name" value="TOPRIM"/>
    <property type="match status" value="1"/>
</dbReference>
<dbReference type="SUPFAM" id="SSF56712">
    <property type="entry name" value="Prokaryotic type I DNA topoisomerase"/>
    <property type="match status" value="1"/>
</dbReference>
<dbReference type="SUPFAM" id="SSF57783">
    <property type="entry name" value="Zinc beta-ribbon"/>
    <property type="match status" value="2"/>
</dbReference>
<dbReference type="PROSITE" id="PS00396">
    <property type="entry name" value="TOPO_IA_1"/>
    <property type="match status" value="1"/>
</dbReference>
<dbReference type="PROSITE" id="PS52039">
    <property type="entry name" value="TOPO_IA_2"/>
    <property type="match status" value="1"/>
</dbReference>
<dbReference type="PROSITE" id="PS50880">
    <property type="entry name" value="TOPRIM"/>
    <property type="match status" value="1"/>
</dbReference>
<evidence type="ECO:0000255" key="1">
    <source>
        <dbReference type="HAMAP-Rule" id="MF_00952"/>
    </source>
</evidence>
<evidence type="ECO:0000255" key="2">
    <source>
        <dbReference type="PROSITE-ProRule" id="PRU01383"/>
    </source>
</evidence>
<gene>
    <name evidence="1" type="primary">topA</name>
    <name type="ordered locus">MG122</name>
</gene>
<name>TOP1_MYCGE</name>
<protein>
    <recommendedName>
        <fullName evidence="1">DNA topoisomerase 1</fullName>
        <ecNumber evidence="1">5.6.2.1</ecNumber>
    </recommendedName>
    <alternativeName>
        <fullName evidence="1">DNA topoisomerase I</fullName>
    </alternativeName>
    <alternativeName>
        <fullName>Omega-protein</fullName>
    </alternativeName>
    <alternativeName>
        <fullName>Relaxing enzyme</fullName>
    </alternativeName>
    <alternativeName>
        <fullName>Swivelase</fullName>
    </alternativeName>
    <alternativeName>
        <fullName>Untwisting enzyme</fullName>
    </alternativeName>
</protein>
<reference key="1">
    <citation type="journal article" date="1995" name="Science">
        <title>The minimal gene complement of Mycoplasma genitalium.</title>
        <authorList>
            <person name="Fraser C.M."/>
            <person name="Gocayne J.D."/>
            <person name="White O."/>
            <person name="Adams M.D."/>
            <person name="Clayton R.A."/>
            <person name="Fleischmann R.D."/>
            <person name="Bult C.J."/>
            <person name="Kerlavage A.R."/>
            <person name="Sutton G.G."/>
            <person name="Kelley J.M."/>
            <person name="Fritchman J.L."/>
            <person name="Weidman J.F."/>
            <person name="Small K.V."/>
            <person name="Sandusky M."/>
            <person name="Fuhrmann J.L."/>
            <person name="Nguyen D.T."/>
            <person name="Utterback T.R."/>
            <person name="Saudek D.M."/>
            <person name="Phillips C.A."/>
            <person name="Merrick J.M."/>
            <person name="Tomb J.-F."/>
            <person name="Dougherty B.A."/>
            <person name="Bott K.F."/>
            <person name="Hu P.-C."/>
            <person name="Lucier T.S."/>
            <person name="Peterson S.N."/>
            <person name="Smith H.O."/>
            <person name="Hutchison C.A. III"/>
            <person name="Venter J.C."/>
        </authorList>
    </citation>
    <scope>NUCLEOTIDE SEQUENCE [LARGE SCALE GENOMIC DNA]</scope>
    <source>
        <strain>ATCC 33530 / DSM 19775 / NCTC 10195 / G37</strain>
    </source>
</reference>
<reference key="2">
    <citation type="journal article" date="1993" name="J. Bacteriol.">
        <title>A survey of the Mycoplasma genitalium genome by using random sequencing.</title>
        <authorList>
            <person name="Peterson S.N."/>
            <person name="Hu P.-C."/>
            <person name="Bott K.F."/>
            <person name="Hutchison C.A. III"/>
        </authorList>
    </citation>
    <scope>NUCLEOTIDE SEQUENCE [GENOMIC DNA] OF 399-481 AND 527-657</scope>
    <source>
        <strain>ATCC 33530 / DSM 19775 / NCTC 10195 / G37</strain>
    </source>
</reference>
<organism>
    <name type="scientific">Mycoplasma genitalium (strain ATCC 33530 / DSM 19775 / NCTC 10195 / G37)</name>
    <name type="common">Mycoplasmoides genitalium</name>
    <dbReference type="NCBI Taxonomy" id="243273"/>
    <lineage>
        <taxon>Bacteria</taxon>
        <taxon>Bacillati</taxon>
        <taxon>Mycoplasmatota</taxon>
        <taxon>Mycoplasmoidales</taxon>
        <taxon>Mycoplasmoidaceae</taxon>
        <taxon>Mycoplasmoides</taxon>
    </lineage>
</organism>